<keyword id="KW-0067">ATP-binding</keyword>
<keyword id="KW-0963">Cytoplasm</keyword>
<keyword id="KW-0418">Kinase</keyword>
<keyword id="KW-0520">NAD</keyword>
<keyword id="KW-0521">NADP</keyword>
<keyword id="KW-0547">Nucleotide-binding</keyword>
<keyword id="KW-0808">Transferase</keyword>
<reference key="1">
    <citation type="journal article" date="2009" name="J. Bacteriol.">
        <title>Genome sequence of Azotobacter vinelandii, an obligate aerobe specialized to support diverse anaerobic metabolic processes.</title>
        <authorList>
            <person name="Setubal J.C."/>
            <person name="Dos Santos P."/>
            <person name="Goldman B.S."/>
            <person name="Ertesvaag H."/>
            <person name="Espin G."/>
            <person name="Rubio L.M."/>
            <person name="Valla S."/>
            <person name="Almeida N.F."/>
            <person name="Balasubramanian D."/>
            <person name="Cromes L."/>
            <person name="Curatti L."/>
            <person name="Du Z."/>
            <person name="Godsy E."/>
            <person name="Goodner B."/>
            <person name="Hellner-Burris K."/>
            <person name="Hernandez J.A."/>
            <person name="Houmiel K."/>
            <person name="Imperial J."/>
            <person name="Kennedy C."/>
            <person name="Larson T.J."/>
            <person name="Latreille P."/>
            <person name="Ligon L.S."/>
            <person name="Lu J."/>
            <person name="Maerk M."/>
            <person name="Miller N.M."/>
            <person name="Norton S."/>
            <person name="O'Carroll I.P."/>
            <person name="Paulsen I."/>
            <person name="Raulfs E.C."/>
            <person name="Roemer R."/>
            <person name="Rosser J."/>
            <person name="Segura D."/>
            <person name="Slater S."/>
            <person name="Stricklin S.L."/>
            <person name="Studholme D.J."/>
            <person name="Sun J."/>
            <person name="Viana C.J."/>
            <person name="Wallin E."/>
            <person name="Wang B."/>
            <person name="Wheeler C."/>
            <person name="Zhu H."/>
            <person name="Dean D.R."/>
            <person name="Dixon R."/>
            <person name="Wood D."/>
        </authorList>
    </citation>
    <scope>NUCLEOTIDE SEQUENCE [LARGE SCALE GENOMIC DNA]</scope>
    <source>
        <strain>DJ / ATCC BAA-1303</strain>
    </source>
</reference>
<sequence length="295" mass="32299">MEHFRNIGIIGRLGSTQVVDTIRRLKRFLLDRHLHVILDEGIAELLPGHGLQVSSRKQLGEVCDMVVVVGGDGSMLGAARALARYKVPVLGINRGSLGFLTDIRPDELETRVAEVLDGQYTVESRFLLETQVRRKLEPIGQGDALNDVVLHPGKSTRMIEFELYIDGQFVCSQKSDGLIVSTPTGSTAYALSAGGPIMHPKLDAIVIVPMYPHTLSSRPIVVAGNSELKIVVSPKMDIYPQVSCDGQNHFTCSPGDIVTISKKPQRLQLIHPLDHNYYEVCRTKLGWGSRLGGGS</sequence>
<accession>C1DPY6</accession>
<comment type="function">
    <text evidence="1">Involved in the regulation of the intracellular balance of NAD and NADP, and is a key enzyme in the biosynthesis of NADP. Catalyzes specifically the phosphorylation on 2'-hydroxyl of the adenosine moiety of NAD to yield NADP.</text>
</comment>
<comment type="catalytic activity">
    <reaction evidence="1">
        <text>NAD(+) + ATP = ADP + NADP(+) + H(+)</text>
        <dbReference type="Rhea" id="RHEA:18629"/>
        <dbReference type="ChEBI" id="CHEBI:15378"/>
        <dbReference type="ChEBI" id="CHEBI:30616"/>
        <dbReference type="ChEBI" id="CHEBI:57540"/>
        <dbReference type="ChEBI" id="CHEBI:58349"/>
        <dbReference type="ChEBI" id="CHEBI:456216"/>
        <dbReference type="EC" id="2.7.1.23"/>
    </reaction>
</comment>
<comment type="cofactor">
    <cofactor evidence="1">
        <name>a divalent metal cation</name>
        <dbReference type="ChEBI" id="CHEBI:60240"/>
    </cofactor>
</comment>
<comment type="subcellular location">
    <subcellularLocation>
        <location evidence="1">Cytoplasm</location>
    </subcellularLocation>
</comment>
<comment type="similarity">
    <text evidence="1">Belongs to the NAD kinase family.</text>
</comment>
<gene>
    <name evidence="1" type="primary">nadK</name>
    <name type="ordered locus">Avin_34070</name>
</gene>
<protein>
    <recommendedName>
        <fullName evidence="1">NAD kinase</fullName>
        <ecNumber evidence="1">2.7.1.23</ecNumber>
    </recommendedName>
    <alternativeName>
        <fullName evidence="1">ATP-dependent NAD kinase</fullName>
    </alternativeName>
</protein>
<proteinExistence type="inferred from homology"/>
<name>NADK_AZOVD</name>
<evidence type="ECO:0000255" key="1">
    <source>
        <dbReference type="HAMAP-Rule" id="MF_00361"/>
    </source>
</evidence>
<feature type="chain" id="PRO_1000205411" description="NAD kinase">
    <location>
        <begin position="1"/>
        <end position="295"/>
    </location>
</feature>
<feature type="active site" description="Proton acceptor" evidence="1">
    <location>
        <position position="72"/>
    </location>
</feature>
<feature type="binding site" evidence="1">
    <location>
        <begin position="72"/>
        <end position="73"/>
    </location>
    <ligand>
        <name>NAD(+)</name>
        <dbReference type="ChEBI" id="CHEBI:57540"/>
    </ligand>
</feature>
<feature type="binding site" evidence="1">
    <location>
        <begin position="146"/>
        <end position="147"/>
    </location>
    <ligand>
        <name>NAD(+)</name>
        <dbReference type="ChEBI" id="CHEBI:57540"/>
    </ligand>
</feature>
<feature type="binding site" evidence="1">
    <location>
        <position position="157"/>
    </location>
    <ligand>
        <name>NAD(+)</name>
        <dbReference type="ChEBI" id="CHEBI:57540"/>
    </ligand>
</feature>
<feature type="binding site" evidence="1">
    <location>
        <position position="174"/>
    </location>
    <ligand>
        <name>NAD(+)</name>
        <dbReference type="ChEBI" id="CHEBI:57540"/>
    </ligand>
</feature>
<feature type="binding site" evidence="1">
    <location>
        <position position="176"/>
    </location>
    <ligand>
        <name>NAD(+)</name>
        <dbReference type="ChEBI" id="CHEBI:57540"/>
    </ligand>
</feature>
<feature type="binding site" evidence="1">
    <location>
        <begin position="187"/>
        <end position="192"/>
    </location>
    <ligand>
        <name>NAD(+)</name>
        <dbReference type="ChEBI" id="CHEBI:57540"/>
    </ligand>
</feature>
<feature type="binding site" evidence="1">
    <location>
        <position position="247"/>
    </location>
    <ligand>
        <name>NAD(+)</name>
        <dbReference type="ChEBI" id="CHEBI:57540"/>
    </ligand>
</feature>
<organism>
    <name type="scientific">Azotobacter vinelandii (strain DJ / ATCC BAA-1303)</name>
    <dbReference type="NCBI Taxonomy" id="322710"/>
    <lineage>
        <taxon>Bacteria</taxon>
        <taxon>Pseudomonadati</taxon>
        <taxon>Pseudomonadota</taxon>
        <taxon>Gammaproteobacteria</taxon>
        <taxon>Pseudomonadales</taxon>
        <taxon>Pseudomonadaceae</taxon>
        <taxon>Azotobacter</taxon>
    </lineage>
</organism>
<dbReference type="EC" id="2.7.1.23" evidence="1"/>
<dbReference type="EMBL" id="CP001157">
    <property type="protein sequence ID" value="ACO79557.1"/>
    <property type="molecule type" value="Genomic_DNA"/>
</dbReference>
<dbReference type="RefSeq" id="WP_012701937.1">
    <property type="nucleotide sequence ID" value="NC_012560.1"/>
</dbReference>
<dbReference type="SMR" id="C1DPY6"/>
<dbReference type="STRING" id="322710.Avin_34070"/>
<dbReference type="EnsemblBacteria" id="ACO79557">
    <property type="protein sequence ID" value="ACO79557"/>
    <property type="gene ID" value="Avin_34070"/>
</dbReference>
<dbReference type="GeneID" id="88186418"/>
<dbReference type="KEGG" id="avn:Avin_34070"/>
<dbReference type="eggNOG" id="COG0061">
    <property type="taxonomic scope" value="Bacteria"/>
</dbReference>
<dbReference type="HOGENOM" id="CLU_008831_0_1_6"/>
<dbReference type="OrthoDB" id="9774737at2"/>
<dbReference type="Proteomes" id="UP000002424">
    <property type="component" value="Chromosome"/>
</dbReference>
<dbReference type="GO" id="GO:0005737">
    <property type="term" value="C:cytoplasm"/>
    <property type="evidence" value="ECO:0007669"/>
    <property type="project" value="UniProtKB-SubCell"/>
</dbReference>
<dbReference type="GO" id="GO:0005524">
    <property type="term" value="F:ATP binding"/>
    <property type="evidence" value="ECO:0007669"/>
    <property type="project" value="UniProtKB-KW"/>
</dbReference>
<dbReference type="GO" id="GO:0046872">
    <property type="term" value="F:metal ion binding"/>
    <property type="evidence" value="ECO:0007669"/>
    <property type="project" value="UniProtKB-UniRule"/>
</dbReference>
<dbReference type="GO" id="GO:0051287">
    <property type="term" value="F:NAD binding"/>
    <property type="evidence" value="ECO:0007669"/>
    <property type="project" value="UniProtKB-ARBA"/>
</dbReference>
<dbReference type="GO" id="GO:0003951">
    <property type="term" value="F:NAD+ kinase activity"/>
    <property type="evidence" value="ECO:0007669"/>
    <property type="project" value="UniProtKB-UniRule"/>
</dbReference>
<dbReference type="GO" id="GO:0019674">
    <property type="term" value="P:NAD metabolic process"/>
    <property type="evidence" value="ECO:0007669"/>
    <property type="project" value="InterPro"/>
</dbReference>
<dbReference type="GO" id="GO:0006741">
    <property type="term" value="P:NADP biosynthetic process"/>
    <property type="evidence" value="ECO:0007669"/>
    <property type="project" value="UniProtKB-UniRule"/>
</dbReference>
<dbReference type="FunFam" id="2.60.200.30:FF:000001">
    <property type="entry name" value="NAD kinase"/>
    <property type="match status" value="1"/>
</dbReference>
<dbReference type="Gene3D" id="3.40.50.10330">
    <property type="entry name" value="Probable inorganic polyphosphate/atp-NAD kinase, domain 1"/>
    <property type="match status" value="1"/>
</dbReference>
<dbReference type="Gene3D" id="2.60.200.30">
    <property type="entry name" value="Probable inorganic polyphosphate/atp-NAD kinase, domain 2"/>
    <property type="match status" value="1"/>
</dbReference>
<dbReference type="HAMAP" id="MF_00361">
    <property type="entry name" value="NAD_kinase"/>
    <property type="match status" value="1"/>
</dbReference>
<dbReference type="InterPro" id="IPR017438">
    <property type="entry name" value="ATP-NAD_kinase_N"/>
</dbReference>
<dbReference type="InterPro" id="IPR017437">
    <property type="entry name" value="ATP-NAD_kinase_PpnK-typ_C"/>
</dbReference>
<dbReference type="InterPro" id="IPR016064">
    <property type="entry name" value="NAD/diacylglycerol_kinase_sf"/>
</dbReference>
<dbReference type="InterPro" id="IPR002504">
    <property type="entry name" value="NADK"/>
</dbReference>
<dbReference type="NCBIfam" id="NF002306">
    <property type="entry name" value="PRK01231.1"/>
    <property type="match status" value="1"/>
</dbReference>
<dbReference type="PANTHER" id="PTHR20275">
    <property type="entry name" value="NAD KINASE"/>
    <property type="match status" value="1"/>
</dbReference>
<dbReference type="PANTHER" id="PTHR20275:SF0">
    <property type="entry name" value="NAD KINASE"/>
    <property type="match status" value="1"/>
</dbReference>
<dbReference type="Pfam" id="PF01513">
    <property type="entry name" value="NAD_kinase"/>
    <property type="match status" value="1"/>
</dbReference>
<dbReference type="Pfam" id="PF20143">
    <property type="entry name" value="NAD_kinase_C"/>
    <property type="match status" value="1"/>
</dbReference>
<dbReference type="SUPFAM" id="SSF111331">
    <property type="entry name" value="NAD kinase/diacylglycerol kinase-like"/>
    <property type="match status" value="1"/>
</dbReference>